<sequence>MIGLIIVSHSKLLADGLHQLAAQMQNKQKCHIITAAGVDDETHPIGTDAVKVMEAIESLSDAEHIILLMDLGSALLSAETALDLIDPDLAEKVHLCSAPLVEGAIAITAAASGGASIDEILNEAQQALQAKQQQLNDTVTTTENEKDKHTHFSEQALTTQWVVKNPSGLHIRPAAKLATLLSGFTATLELRHGEKRADAKSMNQIALLQVRQGDKITLVAEGVDSQNAINAFNQLAQHNFGDNIATTDSKTFVGKTAYVPTVAGLAHHHAPNTELCISSYQTSENETRRATKAIEQLKTHLDSLANTLNEQYGEEIANIFRGHRLLLEDDELVESITQSIENECNTAYDAISNIFNNMSKQYQQLDDEYLQARFIDIEDLKNQLLMSISSVAQPSCAFTEPTIILSGNLGPSELLRYRNTNVVGVALANGSPYSHTCIIAAKMGLPILTDLGDNIHQIAEQTKLQLSIETRSLIVAS</sequence>
<dbReference type="EC" id="2.7.1.121" evidence="1"/>
<dbReference type="EMBL" id="CP003488">
    <property type="protein sequence ID" value="AFH92942.1"/>
    <property type="molecule type" value="Genomic_DNA"/>
</dbReference>
<dbReference type="RefSeq" id="WP_014656596.1">
    <property type="nucleotide sequence ID" value="NC_017731.1"/>
</dbReference>
<dbReference type="SMR" id="P0DN88"/>
<dbReference type="KEGG" id="psi:S70_05330"/>
<dbReference type="PATRIC" id="fig|1157951.4.peg.1055"/>
<dbReference type="HOGENOM" id="CLU_045361_0_0_6"/>
<dbReference type="Proteomes" id="UP000005012">
    <property type="component" value="Chromosome"/>
</dbReference>
<dbReference type="GO" id="GO:0016020">
    <property type="term" value="C:membrane"/>
    <property type="evidence" value="ECO:0007669"/>
    <property type="project" value="InterPro"/>
</dbReference>
<dbReference type="GO" id="GO:0047324">
    <property type="term" value="F:phosphoenolpyruvate-glycerone phosphotransferase activity"/>
    <property type="evidence" value="ECO:0007669"/>
    <property type="project" value="UniProtKB-EC"/>
</dbReference>
<dbReference type="GO" id="GO:0019563">
    <property type="term" value="P:glycerol catabolic process"/>
    <property type="evidence" value="ECO:0007669"/>
    <property type="project" value="InterPro"/>
</dbReference>
<dbReference type="GO" id="GO:0009401">
    <property type="term" value="P:phosphoenolpyruvate-dependent sugar phosphotransferase system"/>
    <property type="evidence" value="ECO:0007669"/>
    <property type="project" value="InterPro"/>
</dbReference>
<dbReference type="CDD" id="cd00367">
    <property type="entry name" value="PTS-HPr_like"/>
    <property type="match status" value="1"/>
</dbReference>
<dbReference type="Gene3D" id="3.30.1340.10">
    <property type="entry name" value="HPr-like"/>
    <property type="match status" value="1"/>
</dbReference>
<dbReference type="Gene3D" id="3.50.30.10">
    <property type="entry name" value="Phosphohistidine domain"/>
    <property type="match status" value="1"/>
</dbReference>
<dbReference type="Gene3D" id="3.40.50.510">
    <property type="entry name" value="Phosphotransferase system, mannose-type IIA component"/>
    <property type="match status" value="1"/>
</dbReference>
<dbReference type="Gene3D" id="1.10.274.10">
    <property type="entry name" value="PtsI, HPr-binding domain"/>
    <property type="match status" value="1"/>
</dbReference>
<dbReference type="InterPro" id="IPR039643">
    <property type="entry name" value="DhaM"/>
</dbReference>
<dbReference type="InterPro" id="IPR012844">
    <property type="entry name" value="DhaM_N"/>
</dbReference>
<dbReference type="InterPro" id="IPR000032">
    <property type="entry name" value="HPr-like"/>
</dbReference>
<dbReference type="InterPro" id="IPR035895">
    <property type="entry name" value="HPr-like_sf"/>
</dbReference>
<dbReference type="InterPro" id="IPR008279">
    <property type="entry name" value="PEP-util_enz_mobile_dom"/>
</dbReference>
<dbReference type="InterPro" id="IPR036637">
    <property type="entry name" value="Phosphohistidine_dom_sf"/>
</dbReference>
<dbReference type="InterPro" id="IPR004701">
    <property type="entry name" value="PTS_EIIA_man-typ"/>
</dbReference>
<dbReference type="InterPro" id="IPR036662">
    <property type="entry name" value="PTS_EIIA_man-typ_sf"/>
</dbReference>
<dbReference type="InterPro" id="IPR008731">
    <property type="entry name" value="PTS_EIN"/>
</dbReference>
<dbReference type="InterPro" id="IPR036618">
    <property type="entry name" value="PtsI_HPr-bd_sf"/>
</dbReference>
<dbReference type="NCBIfam" id="TIGR02364">
    <property type="entry name" value="dha_pts"/>
    <property type="match status" value="1"/>
</dbReference>
<dbReference type="NCBIfam" id="NF008478">
    <property type="entry name" value="PRK11377.1"/>
    <property type="match status" value="1"/>
</dbReference>
<dbReference type="NCBIfam" id="TIGR01003">
    <property type="entry name" value="PTS_HPr_family"/>
    <property type="match status" value="1"/>
</dbReference>
<dbReference type="PANTHER" id="PTHR38594">
    <property type="entry name" value="PEP-DEPENDENT DIHYDROXYACETONE KINASE, PHOSPHORYL DONOR SUBUNIT DHAM"/>
    <property type="match status" value="1"/>
</dbReference>
<dbReference type="PANTHER" id="PTHR38594:SF1">
    <property type="entry name" value="PEP-DEPENDENT DIHYDROXYACETONE KINASE, PHOSPHORYL DONOR SUBUNIT DHAM"/>
    <property type="match status" value="1"/>
</dbReference>
<dbReference type="Pfam" id="PF03610">
    <property type="entry name" value="EIIA-man"/>
    <property type="match status" value="1"/>
</dbReference>
<dbReference type="Pfam" id="PF05524">
    <property type="entry name" value="PEP-utilisers_N"/>
    <property type="match status" value="1"/>
</dbReference>
<dbReference type="Pfam" id="PF00391">
    <property type="entry name" value="PEP-utilizers"/>
    <property type="match status" value="1"/>
</dbReference>
<dbReference type="Pfam" id="PF00381">
    <property type="entry name" value="PTS-HPr"/>
    <property type="match status" value="1"/>
</dbReference>
<dbReference type="PRINTS" id="PR00107">
    <property type="entry name" value="PHOSPHOCPHPR"/>
</dbReference>
<dbReference type="SUPFAM" id="SSF47831">
    <property type="entry name" value="Enzyme I of the PEP:sugar phosphotransferase system HPr-binding (sub)domain"/>
    <property type="match status" value="1"/>
</dbReference>
<dbReference type="SUPFAM" id="SSF55594">
    <property type="entry name" value="HPr-like"/>
    <property type="match status" value="1"/>
</dbReference>
<dbReference type="SUPFAM" id="SSF52009">
    <property type="entry name" value="Phosphohistidine domain"/>
    <property type="match status" value="1"/>
</dbReference>
<dbReference type="SUPFAM" id="SSF53062">
    <property type="entry name" value="PTS system fructose IIA component-like"/>
    <property type="match status" value="1"/>
</dbReference>
<dbReference type="PROSITE" id="PS51096">
    <property type="entry name" value="PTS_EIIA_TYPE_4"/>
    <property type="match status" value="1"/>
</dbReference>
<dbReference type="PROSITE" id="PS51350">
    <property type="entry name" value="PTS_HPR_DOM"/>
    <property type="match status" value="1"/>
</dbReference>
<name>DHAM_PROSM</name>
<gene>
    <name evidence="1" type="primary">dhaM</name>
    <name evidence="7" type="ordered locus">S70_05330</name>
</gene>
<feature type="chain" id="PRO_0000435891" description="PEP-dependent dihydroxyacetone kinase, phosphoryl donor subunit DhaM">
    <location>
        <begin position="1"/>
        <end position="477"/>
    </location>
</feature>
<feature type="domain" description="PTS EIIA type-4" evidence="2">
    <location>
        <begin position="1"/>
        <end position="135"/>
    </location>
</feature>
<feature type="domain" description="HPr" evidence="3">
    <location>
        <begin position="156"/>
        <end position="243"/>
    </location>
</feature>
<feature type="region of interest" description="PTS EI-like, N-terminal part" evidence="1">
    <location>
        <begin position="269"/>
        <end position="477"/>
    </location>
</feature>
<feature type="active site" description="Tele-phosphohistidine intermediate" evidence="2">
    <location>
        <position position="9"/>
    </location>
</feature>
<feature type="active site" description="Pros-phosphohistidine intermediate" evidence="3">
    <location>
        <position position="170"/>
    </location>
</feature>
<feature type="active site" description="Tele-phosphohistidine intermediate" evidence="1">
    <location>
        <position position="435"/>
    </location>
</feature>
<evidence type="ECO:0000250" key="1">
    <source>
        <dbReference type="UniProtKB" id="P37349"/>
    </source>
</evidence>
<evidence type="ECO:0000255" key="2">
    <source>
        <dbReference type="PROSITE-ProRule" id="PRU00419"/>
    </source>
</evidence>
<evidence type="ECO:0000255" key="3">
    <source>
        <dbReference type="PROSITE-ProRule" id="PRU00681"/>
    </source>
</evidence>
<evidence type="ECO:0000269" key="4">
    <source>
    </source>
</evidence>
<evidence type="ECO:0000269" key="5">
    <source>
    </source>
</evidence>
<evidence type="ECO:0000305" key="6"/>
<evidence type="ECO:0000312" key="7">
    <source>
        <dbReference type="EMBL" id="AFH92942.1"/>
    </source>
</evidence>
<comment type="function">
    <text evidence="1">Component of the dihydroxyacetone kinase complex, which is responsible for the phosphoenolpyruvate (PEP)-dependent phosphorylation of dihydroxyacetone. DhaM serves as the phosphoryl donor. Is phosphorylated by phosphoenolpyruvate in an EI- and HPr-dependent reaction, and a phosphorelay system on histidine residues finally leads to phosphoryl transfer to DhaL and dihydroxyacetone.</text>
</comment>
<comment type="catalytic activity">
    <reaction evidence="1">
        <text>dihydroxyacetone + phosphoenolpyruvate = dihydroxyacetone phosphate + pyruvate</text>
        <dbReference type="Rhea" id="RHEA:18381"/>
        <dbReference type="ChEBI" id="CHEBI:15361"/>
        <dbReference type="ChEBI" id="CHEBI:16016"/>
        <dbReference type="ChEBI" id="CHEBI:57642"/>
        <dbReference type="ChEBI" id="CHEBI:58702"/>
        <dbReference type="EC" id="2.7.1.121"/>
    </reaction>
</comment>
<comment type="subunit">
    <text evidence="1">Homodimer. The dihydroxyacetone kinase complex is composed of a homodimer of DhaM, a homodimer of DhaK and the subunit DhaL.</text>
</comment>
<comment type="domain">
    <text evidence="1">Consists of three domains. The N-terminal dimerization domain has the same fold as the IIA domain of the mannose transporter of the bacterial phosphoenolpyruvate:sugar phosphotransferase system (PTS). The middle domain is similar to HPr and the C-terminus is similar to the N-terminal domain of enzyme I (EI) of the PTS. The IIA domain of DhaM (via phospho-His-9), instead of ATP, is the phosphoryl donor to dihydroxyacetone (Dha). The phosphoryl flow likely involves HPr ('His-15') -&gt; DhaM (His-435 -&gt; His-170 -&gt; His-9) -&gt; DhaL-ADP -&gt; Dha. The HPr-like domain of DhaM cannot efficiently substitute for the general carrier protein HPr.</text>
</comment>
<comment type="miscellaneous">
    <text evidence="1">Unlike the carbohydrate-specific transporters of the PTS, the complex DhaKLM has no transport activity.</text>
</comment>
<comment type="similarity">
    <text evidence="6">Belongs to the PEP-utilizing enzyme family.</text>
</comment>
<comment type="caution">
    <text evidence="4 5">Was reported to be a protein deacetylase that removes acetyl groups on specific lysine residues in target proteins (PubMed:26716769). However, later experiments demonstrate that the protein ortholog in E.coli does not have any protein deacetylase activity; the discrepancy observed seems to be due to contaminants having proteolytic activity (PubMed:29939131).</text>
</comment>
<proteinExistence type="inferred from homology"/>
<reference key="1">
    <citation type="submission" date="2012-04" db="EMBL/GenBank/DDBJ databases">
        <title>Complete genome sequence of Providencia stuartii clinical isolate MRSN 2154.</title>
        <authorList>
            <person name="Clifford R.J."/>
            <person name="Hang J."/>
            <person name="Riley M.C."/>
            <person name="Onmus-Leone F."/>
            <person name="Kuschner R.A."/>
            <person name="Lesho E.P."/>
            <person name="Waterman P.E."/>
        </authorList>
    </citation>
    <scope>NUCLEOTIDE SEQUENCE [LARGE SCALE GENOMIC DNA]</scope>
    <source>
        <strain>MRSN 2154</strain>
    </source>
</reference>
<reference key="2">
    <citation type="journal article" date="2015" name="Elife">
        <title>YcgC represents a new protein deacetylase family in prokaryotes.</title>
        <authorList>
            <person name="Tu S."/>
            <person name="Guo S.J."/>
            <person name="Chen C.S."/>
            <person name="Liu C.X."/>
            <person name="Jiang H.W."/>
            <person name="Ge F."/>
            <person name="Deng J.Y."/>
            <person name="Zhou Y.M."/>
            <person name="Czajkowsky D.M."/>
            <person name="Li Y."/>
            <person name="Qi B.R."/>
            <person name="Ahn Y.H."/>
            <person name="Cole P.A."/>
            <person name="Zhu H."/>
            <person name="Tao S.C."/>
        </authorList>
    </citation>
    <scope>PROTEIN-LYSINE DEACETYLASE ACTIVITY</scope>
    <scope>CAUTION</scope>
    <source>
        <strain>MRSN 2154</strain>
    </source>
</reference>
<reference key="3">
    <citation type="journal article" date="2018" name="Elife">
        <title>Comment on 'YcgC represents a new protein deacetylase family in prokaryotes'.</title>
        <authorList>
            <person name="Kremer M."/>
            <person name="Kuhlmann N."/>
            <person name="Lechner M."/>
            <person name="Baldus L."/>
            <person name="Lammers M."/>
        </authorList>
    </citation>
    <scope>NO PROTEIN-LYSINE DEACETYLASE ACTIVITY IN E.COLI ORTHOLOG</scope>
    <scope>CAUTION</scope>
</reference>
<accession>P0DN88</accession>
<accession>A0A140NLU6</accession>
<protein>
    <recommendedName>
        <fullName evidence="1">PEP-dependent dihydroxyacetone kinase, phosphoryl donor subunit DhaM</fullName>
        <ecNumber evidence="1">2.7.1.121</ecNumber>
    </recommendedName>
    <alternativeName>
        <fullName evidence="1">Dihydroxyacetone kinase subunit M</fullName>
    </alternativeName>
</protein>
<keyword id="KW-0808">Transferase</keyword>
<organism>
    <name type="scientific">Providencia stuartii (strain MRSN 2154)</name>
    <dbReference type="NCBI Taxonomy" id="1157951"/>
    <lineage>
        <taxon>Bacteria</taxon>
        <taxon>Pseudomonadati</taxon>
        <taxon>Pseudomonadota</taxon>
        <taxon>Gammaproteobacteria</taxon>
        <taxon>Enterobacterales</taxon>
        <taxon>Morganellaceae</taxon>
        <taxon>Providencia</taxon>
    </lineage>
</organism>